<gene>
    <name evidence="7" type="primary">FNR</name>
    <name evidence="16" type="ORF">PF3D7_0623200</name>
</gene>
<protein>
    <recommendedName>
        <fullName evidence="8 9 10">Ferredoxin--NADP reductase, apicoplast</fullName>
        <ecNumber evidence="12 13 14 15">1.18.1.2</ecNumber>
    </recommendedName>
</protein>
<reference key="1">
    <citation type="journal article" date="2002" name="Nature">
        <title>Genome sequence of the human malaria parasite Plasmodium falciparum.</title>
        <authorList>
            <person name="Gardner M.J."/>
            <person name="Hall N."/>
            <person name="Fung E."/>
            <person name="White O."/>
            <person name="Berriman M."/>
            <person name="Hyman R.W."/>
            <person name="Carlton J.M."/>
            <person name="Pain A."/>
            <person name="Nelson K.E."/>
            <person name="Bowman S."/>
            <person name="Paulsen I.T."/>
            <person name="James K.D."/>
            <person name="Eisen J.A."/>
            <person name="Rutherford K.M."/>
            <person name="Salzberg S.L."/>
            <person name="Craig A."/>
            <person name="Kyes S."/>
            <person name="Chan M.-S."/>
            <person name="Nene V."/>
            <person name="Shallom S.J."/>
            <person name="Suh B."/>
            <person name="Peterson J."/>
            <person name="Angiuoli S."/>
            <person name="Pertea M."/>
            <person name="Allen J."/>
            <person name="Selengut J."/>
            <person name="Haft D."/>
            <person name="Mather M.W."/>
            <person name="Vaidya A.B."/>
            <person name="Martin D.M.A."/>
            <person name="Fairlamb A.H."/>
            <person name="Fraunholz M.J."/>
            <person name="Roos D.S."/>
            <person name="Ralph S.A."/>
            <person name="McFadden G.I."/>
            <person name="Cummings L.M."/>
            <person name="Subramanian G.M."/>
            <person name="Mungall C."/>
            <person name="Venter J.C."/>
            <person name="Carucci D.J."/>
            <person name="Hoffman S.L."/>
            <person name="Newbold C."/>
            <person name="Davis R.W."/>
            <person name="Fraser C.M."/>
            <person name="Barrell B.G."/>
        </authorList>
    </citation>
    <scope>NUCLEOTIDE SEQUENCE [LARGE SCALE GENOMIC DNA]</scope>
    <source>
        <strain>3D7</strain>
    </source>
</reference>
<reference key="2">
    <citation type="journal article" date="2002" name="Nature">
        <title>Sequence of Plasmodium falciparum chromosomes 1, 3-9 and 13.</title>
        <authorList>
            <person name="Hall N."/>
            <person name="Pain A."/>
            <person name="Berriman M."/>
            <person name="Churcher C.M."/>
            <person name="Harris B."/>
            <person name="Harris D."/>
            <person name="Mungall K.L."/>
            <person name="Bowman S."/>
            <person name="Atkin R."/>
            <person name="Baker S."/>
            <person name="Barron A."/>
            <person name="Brooks K."/>
            <person name="Buckee C.O."/>
            <person name="Burrows C."/>
            <person name="Cherevach I."/>
            <person name="Chillingworth C."/>
            <person name="Chillingworth T."/>
            <person name="Christodoulou Z."/>
            <person name="Clark L."/>
            <person name="Clark R."/>
            <person name="Corton C."/>
            <person name="Cronin A."/>
            <person name="Davies R.M."/>
            <person name="Davis P."/>
            <person name="Dear P."/>
            <person name="Dearden F."/>
            <person name="Doggett J."/>
            <person name="Feltwell T."/>
            <person name="Goble A."/>
            <person name="Goodhead I."/>
            <person name="Gwilliam R."/>
            <person name="Hamlin N."/>
            <person name="Hance Z."/>
            <person name="Harper D."/>
            <person name="Hauser H."/>
            <person name="Hornsby T."/>
            <person name="Holroyd S."/>
            <person name="Horrocks P."/>
            <person name="Humphray S."/>
            <person name="Jagels K."/>
            <person name="James K.D."/>
            <person name="Johnson D."/>
            <person name="Kerhornou A."/>
            <person name="Knights A."/>
            <person name="Konfortov B."/>
            <person name="Kyes S."/>
            <person name="Larke N."/>
            <person name="Lawson D."/>
            <person name="Lennard N."/>
            <person name="Line A."/>
            <person name="Maddison M."/>
            <person name="Mclean J."/>
            <person name="Mooney P."/>
            <person name="Moule S."/>
            <person name="Murphy L."/>
            <person name="Oliver K."/>
            <person name="Ormond D."/>
            <person name="Price C."/>
            <person name="Quail M.A."/>
            <person name="Rabbinowitsch E."/>
            <person name="Rajandream M.A."/>
            <person name="Rutter S."/>
            <person name="Rutherford K.M."/>
            <person name="Sanders M."/>
            <person name="Simmonds M."/>
            <person name="Seeger K."/>
            <person name="Sharp S."/>
            <person name="Smith R."/>
            <person name="Squares R."/>
            <person name="Squares S."/>
            <person name="Stevens K."/>
            <person name="Taylor K."/>
            <person name="Tivey A."/>
            <person name="Unwin L."/>
            <person name="Whitehead S."/>
            <person name="Woodward J.R."/>
            <person name="Sulston J.E."/>
            <person name="Craig A."/>
            <person name="Newbold C."/>
            <person name="Barrell B.G."/>
        </authorList>
    </citation>
    <scope>NUCLEOTIDE SEQUENCE [LARGE SCALE GENOMIC DNA]</scope>
    <source>
        <strain>3D7</strain>
    </source>
</reference>
<reference key="3">
    <citation type="journal article" date="2005" name="FEBS Lett.">
        <title>Reconstitution of an apicoplast-localised electron transfer pathway involved in the isoprenoid biosynthesis of Plasmodium falciparum.</title>
        <authorList>
            <person name="Roehrich R.C."/>
            <person name="Englert N."/>
            <person name="Troschke K."/>
            <person name="Reichenberg A."/>
            <person name="Hintz M."/>
            <person name="Seeber F."/>
            <person name="Balconi E."/>
            <person name="Aliverti A."/>
            <person name="Zanetti G."/>
            <person name="Koehler U."/>
            <person name="Pfeiffer M."/>
            <person name="Beck E."/>
            <person name="Jomaa H."/>
            <person name="Wiesner J."/>
        </authorList>
    </citation>
    <scope>FUNCTION</scope>
    <scope>CATALYTIC ACTIVITY</scope>
</reference>
<reference key="4">
    <citation type="journal article" date="2007" name="J. Biochem.">
        <title>Cloning and characterization of ferredoxin and ferredoxin-NADP+ reductase from human malaria parasite.</title>
        <authorList>
            <person name="Kimata-Ariga Y."/>
            <person name="Kurisu G."/>
            <person name="Kusunoki M."/>
            <person name="Aoki S."/>
            <person name="Sato D."/>
            <person name="Kobayashi T."/>
            <person name="Kita K."/>
            <person name="Horii T."/>
            <person name="Hase T."/>
        </authorList>
    </citation>
    <scope>CATALYTIC ACTIVITY</scope>
    <scope>COFACTOR</scope>
</reference>
<reference evidence="17 18" key="5">
    <citation type="journal article" date="2007" name="J. Mol. Biol.">
        <title>Ferredoxin-NADP+ reductase from Plasmodium falciparum undergoes NADP+-dependent dimerization and inactivation: functional and crystallographic analysis.</title>
        <authorList>
            <person name="Milani M."/>
            <person name="Balconi E."/>
            <person name="Aliverti A."/>
            <person name="Mastrangelo E."/>
            <person name="Seeber F."/>
            <person name="Bolognesi M."/>
            <person name="Zanetti G."/>
        </authorList>
    </citation>
    <scope>X-RAY CRYSTALLOGRAPHY (2.40 ANGSTROMS) OF 56-371 IN COMPLEX WITH FAD AND THE NADP ANALOG ADENOSINE-2'-5'-DIPHOSPHATE</scope>
    <scope>CATALYTIC ACTIVITY</scope>
    <scope>BIOPHYSICOCHEMICAL PROPERTIES</scope>
    <scope>COFACTOR</scope>
    <scope>SUBUNIT</scope>
    <scope>DISULFIDE BOND</scope>
</reference>
<reference evidence="19 20 21" key="6">
    <citation type="journal article" date="2009" name="Biochemistry">
        <title>Plasmodium falciparum ferredoxin-NADP+ reductase His286 plays a dual role in NADP(H) binding and catalysis.</title>
        <authorList>
            <person name="Crobu D."/>
            <person name="Canevari G."/>
            <person name="Milani M."/>
            <person name="Pandini V."/>
            <person name="Vanoni M.A."/>
            <person name="Bolognesi M."/>
            <person name="Zanetti G."/>
            <person name="Aliverti A."/>
        </authorList>
    </citation>
    <scope>X-RAY CRYSTALLOGRAPHY (2.20 ANGSTROMS) OF 56-371 IN COMPLEX WITH FAD AND THE NADP ANALOG ADENOSINE-2'-5'-DIPHOSPHATE</scope>
    <scope>CATALYTIC ACTIVITY</scope>
    <scope>BIOPHYSICOCHEMICAL PROPERTIES</scope>
    <scope>COFACTOR</scope>
    <scope>SUBUNIT</scope>
    <scope>MUTAGENESIS OF LYS-304 AND HIS-341</scope>
    <scope>DISULFIDE BOND</scope>
</reference>
<evidence type="ECO:0000255" key="1"/>
<evidence type="ECO:0000255" key="2">
    <source>
        <dbReference type="PROSITE-ProRule" id="PRU00716"/>
    </source>
</evidence>
<evidence type="ECO:0000269" key="3">
    <source>
    </source>
</evidence>
<evidence type="ECO:0000269" key="4">
    <source>
    </source>
</evidence>
<evidence type="ECO:0000269" key="5">
    <source>
    </source>
</evidence>
<evidence type="ECO:0000269" key="6">
    <source>
    </source>
</evidence>
<evidence type="ECO:0000303" key="7">
    <source>
    </source>
</evidence>
<evidence type="ECO:0000303" key="8">
    <source>
    </source>
</evidence>
<evidence type="ECO:0000303" key="9">
    <source>
    </source>
</evidence>
<evidence type="ECO:0000303" key="10">
    <source>
    </source>
</evidence>
<evidence type="ECO:0000305" key="11"/>
<evidence type="ECO:0000305" key="12">
    <source>
    </source>
</evidence>
<evidence type="ECO:0000305" key="13">
    <source>
    </source>
</evidence>
<evidence type="ECO:0000305" key="14">
    <source>
    </source>
</evidence>
<evidence type="ECO:0000305" key="15">
    <source>
    </source>
</evidence>
<evidence type="ECO:0000312" key="16">
    <source>
        <dbReference type="EMBL" id="CAG25044.1"/>
    </source>
</evidence>
<evidence type="ECO:0007744" key="17">
    <source>
        <dbReference type="PDB" id="2OK7"/>
    </source>
</evidence>
<evidence type="ECO:0007744" key="18">
    <source>
        <dbReference type="PDB" id="2OK8"/>
    </source>
</evidence>
<evidence type="ECO:0007744" key="19">
    <source>
        <dbReference type="PDB" id="3JQP"/>
    </source>
</evidence>
<evidence type="ECO:0007744" key="20">
    <source>
        <dbReference type="PDB" id="3JQQ"/>
    </source>
</evidence>
<evidence type="ECO:0007744" key="21">
    <source>
        <dbReference type="PDB" id="3JQR"/>
    </source>
</evidence>
<evidence type="ECO:0007829" key="22">
    <source>
        <dbReference type="PDB" id="2OK7"/>
    </source>
</evidence>
<evidence type="ECO:0007829" key="23">
    <source>
        <dbReference type="PDB" id="3JQQ"/>
    </source>
</evidence>
<comment type="function">
    <text evidence="3">May play a role in the terminal step of the DOXP/MEP pathway for isoprenoid precursor biosynthesis.</text>
</comment>
<comment type="catalytic activity">
    <reaction evidence="12 13 14 15">
        <text>2 reduced [2Fe-2S]-[ferredoxin] + NADP(+) + H(+) = 2 oxidized [2Fe-2S]-[ferredoxin] + NADPH</text>
        <dbReference type="Rhea" id="RHEA:20125"/>
        <dbReference type="Rhea" id="RHEA-COMP:10000"/>
        <dbReference type="Rhea" id="RHEA-COMP:10001"/>
        <dbReference type="ChEBI" id="CHEBI:15378"/>
        <dbReference type="ChEBI" id="CHEBI:33737"/>
        <dbReference type="ChEBI" id="CHEBI:33738"/>
        <dbReference type="ChEBI" id="CHEBI:57783"/>
        <dbReference type="ChEBI" id="CHEBI:58349"/>
        <dbReference type="EC" id="1.18.1.2"/>
    </reaction>
</comment>
<comment type="cofactor">
    <cofactor evidence="4 5 6">
        <name>FAD</name>
        <dbReference type="ChEBI" id="CHEBI:57692"/>
    </cofactor>
</comment>
<comment type="biophysicochemical properties">
    <kinetics>
        <KM evidence="5 6">36 uM for NADPH</KM>
        <KM evidence="5">720 uM for NADH</KM>
    </kinetics>
</comment>
<comment type="subunit">
    <text evidence="5 6">Monomer (PubMed:17258767). Homodimer; disulfide linked (PubMed:17258767, PubMed:19736991). NADP binding accelerates formation of an inactive, disulfide-linked homodimer when the protein is exposed to air for 24 hours or more (in vitro); the physiological relevance of this is uncertain (PubMed:17258767).</text>
</comment>
<comment type="interaction">
    <interactant intactId="EBI-7046197">
        <id>C6KT68</id>
    </interactant>
    <interactant intactId="EBI-7046314">
        <id>Q8IED5</id>
        <label>FD</label>
    </interactant>
    <organismsDiffer>false</organismsDiffer>
    <experiments>3</experiments>
</comment>
<comment type="interaction">
    <interactant intactId="EBI-7046197">
        <id>C6KT68</id>
    </interactant>
    <interactant intactId="EBI-7046197">
        <id>C6KT68</id>
        <label>FNR</label>
    </interactant>
    <organismsDiffer>false</organismsDiffer>
    <experiments>2</experiments>
</comment>
<comment type="subcellular location">
    <subcellularLocation>
        <location evidence="11">Plastid</location>
        <location evidence="11">Apicoplast</location>
    </subcellularLocation>
</comment>
<comment type="similarity">
    <text evidence="11">Belongs to the ferredoxin--NADP reductase type 1 family.</text>
</comment>
<proteinExistence type="evidence at protein level"/>
<keyword id="KW-0002">3D-structure</keyword>
<keyword id="KW-0933">Apicoplast</keyword>
<keyword id="KW-1015">Disulfide bond</keyword>
<keyword id="KW-0249">Electron transport</keyword>
<keyword id="KW-0274">FAD</keyword>
<keyword id="KW-0285">Flavoprotein</keyword>
<keyword id="KW-0521">NADP</keyword>
<keyword id="KW-0547">Nucleotide-binding</keyword>
<keyword id="KW-0560">Oxidoreductase</keyword>
<keyword id="KW-0934">Plastid</keyword>
<keyword id="KW-1185">Reference proteome</keyword>
<keyword id="KW-0809">Transit peptide</keyword>
<keyword id="KW-0813">Transport</keyword>
<name>FENR_PLAF7</name>
<sequence>MKIRFVFILSVLISGVCCISKNVSRRVANRMTAHSRFLFVHDKYKRNKNFKLKNNKEENNFINLYTVKNPLKCKIVDKINLVRPNSPNEVYHLEINHNGLFKYLEGHTCGIIPYYNELDNNPNNQINKDHNIINTTNHTNHNNIALSHIKKQRCARLYSISSSNNMENLSVAIKIHKYEQTENAPNITNYGYCSGFIKNLKINDDIYLTGAHGYFNLPNDAIQKNTNFIFIATGTGISPYISFLKKLFAYDKNNLYNRNSNYTGYITIYYGVYNEDSILYLNELEYFQKMYPNNINIHYVFSYKQNSDATSFYVQDEIYKRKTEFLNLFNNYKCELYICGHKSIRYKVMDILKSHDQFDEKKKKRVHVEVY</sequence>
<feature type="transit peptide" description="Apicoplast" evidence="1">
    <location>
        <begin position="1"/>
        <end position="18"/>
    </location>
</feature>
<feature type="chain" id="PRO_5002968039" description="Ferredoxin--NADP reductase, apicoplast">
    <location>
        <begin position="19"/>
        <end position="371"/>
    </location>
</feature>
<feature type="domain" description="FAD-binding FR-type" evidence="2">
    <location>
        <begin position="68"/>
        <end position="218"/>
    </location>
</feature>
<feature type="binding site" evidence="5 18">
    <location>
        <position position="68"/>
    </location>
    <ligand>
        <name>FAD</name>
        <dbReference type="ChEBI" id="CHEBI:57692"/>
    </ligand>
</feature>
<feature type="binding site" evidence="5 6 17 18 19 20 21">
    <location>
        <begin position="155"/>
        <end position="159"/>
    </location>
    <ligand>
        <name>FAD</name>
        <dbReference type="ChEBI" id="CHEBI:57692"/>
    </ligand>
</feature>
<feature type="binding site" evidence="5 6 17 18 19 20 21">
    <location>
        <begin position="172"/>
        <end position="179"/>
    </location>
    <ligand>
        <name>FAD</name>
        <dbReference type="ChEBI" id="CHEBI:57692"/>
    </ligand>
</feature>
<feature type="binding site" evidence="14 15 17 19 20">
    <location>
        <position position="174"/>
    </location>
    <ligand>
        <name>NADP(+)</name>
        <dbReference type="ChEBI" id="CHEBI:58349"/>
    </ligand>
</feature>
<feature type="binding site" evidence="5 6 17 18 19 20 21">
    <location>
        <begin position="192"/>
        <end position="194"/>
    </location>
    <ligand>
        <name>FAD</name>
        <dbReference type="ChEBI" id="CHEBI:57692"/>
    </ligand>
</feature>
<feature type="binding site" evidence="6 19">
    <location>
        <position position="235"/>
    </location>
    <ligand>
        <name>FAD</name>
        <dbReference type="ChEBI" id="CHEBI:57692"/>
    </ligand>
</feature>
<feature type="binding site" evidence="14 15 17 19">
    <location>
        <begin position="272"/>
        <end position="273"/>
    </location>
    <ligand>
        <name>NADP(+)</name>
        <dbReference type="ChEBI" id="CHEBI:58349"/>
    </ligand>
</feature>
<feature type="binding site" evidence="14 15 17 19 20">
    <location>
        <position position="302"/>
    </location>
    <ligand>
        <name>NADP(+)</name>
        <dbReference type="ChEBI" id="CHEBI:58349"/>
    </ligand>
</feature>
<feature type="binding site" evidence="14 15 17 19 20">
    <location>
        <begin position="313"/>
        <end position="315"/>
    </location>
    <ligand>
        <name>NADP(+)</name>
        <dbReference type="ChEBI" id="CHEBI:58349"/>
    </ligand>
</feature>
<feature type="binding site" evidence="14 15 17 19 20">
    <location>
        <begin position="341"/>
        <end position="343"/>
    </location>
    <ligand>
        <name>NADP(+)</name>
        <dbReference type="ChEBI" id="CHEBI:58349"/>
    </ligand>
</feature>
<feature type="binding site" evidence="6 20">
    <location>
        <position position="342"/>
    </location>
    <ligand>
        <name>FAD</name>
        <dbReference type="ChEBI" id="CHEBI:57692"/>
    </ligand>
</feature>
<feature type="binding site" evidence="5 6 17 18 19 20 21">
    <location>
        <position position="371"/>
    </location>
    <ligand>
        <name>FAD</name>
        <dbReference type="ChEBI" id="CHEBI:57692"/>
    </ligand>
</feature>
<feature type="disulfide bond" description="Interchain" evidence="5 6 17 18 19 21">
    <location>
        <position position="154"/>
    </location>
</feature>
<feature type="mutagenesis site" description="Slightly decreases affinity for NADPH." evidence="6">
    <original>K</original>
    <variation>A</variation>
    <location>
        <position position="304"/>
    </location>
</feature>
<feature type="mutagenesis site" description="Strongly decreases affinity for NADPH." evidence="6">
    <original>H</original>
    <variation>A</variation>
    <variation>L</variation>
    <location>
        <position position="341"/>
    </location>
</feature>
<feature type="mutagenesis site" description="Strongly decreases catalytic activity. Abolishes NADPH binding." evidence="6">
    <original>H</original>
    <variation>K</variation>
    <location>
        <position position="341"/>
    </location>
</feature>
<feature type="mutagenesis site" description="Increases catalytic activity. Slightly decreases affinity for NADPH." evidence="6">
    <original>H</original>
    <variation>Q</variation>
    <location>
        <position position="341"/>
    </location>
</feature>
<feature type="strand" evidence="23">
    <location>
        <begin position="67"/>
        <end position="69"/>
    </location>
</feature>
<feature type="strand" evidence="23">
    <location>
        <begin position="71"/>
        <end position="80"/>
    </location>
</feature>
<feature type="strand" evidence="23">
    <location>
        <begin position="90"/>
        <end position="96"/>
    </location>
</feature>
<feature type="strand" evidence="23">
    <location>
        <begin position="108"/>
        <end position="111"/>
    </location>
</feature>
<feature type="strand" evidence="23">
    <location>
        <begin position="156"/>
        <end position="160"/>
    </location>
</feature>
<feature type="strand" evidence="23">
    <location>
        <begin position="166"/>
        <end position="174"/>
    </location>
</feature>
<feature type="helix" evidence="23">
    <location>
        <begin position="192"/>
        <end position="198"/>
    </location>
</feature>
<feature type="strand" evidence="23">
    <location>
        <begin position="205"/>
        <end position="212"/>
    </location>
</feature>
<feature type="helix" evidence="23">
    <location>
        <begin position="221"/>
        <end position="224"/>
    </location>
</feature>
<feature type="strand" evidence="23">
    <location>
        <begin position="228"/>
        <end position="233"/>
    </location>
</feature>
<feature type="helix" evidence="23">
    <location>
        <begin position="234"/>
        <end position="237"/>
    </location>
</feature>
<feature type="helix" evidence="23">
    <location>
        <begin position="238"/>
        <end position="247"/>
    </location>
</feature>
<feature type="helix" evidence="23">
    <location>
        <begin position="252"/>
        <end position="254"/>
    </location>
</feature>
<feature type="strand" evidence="23">
    <location>
        <begin position="266"/>
        <end position="274"/>
    </location>
</feature>
<feature type="helix" evidence="23">
    <location>
        <begin position="275"/>
        <end position="277"/>
    </location>
</feature>
<feature type="helix" evidence="23">
    <location>
        <begin position="281"/>
        <end position="290"/>
    </location>
</feature>
<feature type="turn" evidence="23">
    <location>
        <begin position="292"/>
        <end position="294"/>
    </location>
</feature>
<feature type="strand" evidence="23">
    <location>
        <begin position="295"/>
        <end position="301"/>
    </location>
</feature>
<feature type="helix" evidence="23">
    <location>
        <begin position="302"/>
        <end position="304"/>
    </location>
</feature>
<feature type="strand" evidence="22">
    <location>
        <begin position="305"/>
        <end position="308"/>
    </location>
</feature>
<feature type="helix" evidence="23">
    <location>
        <begin position="314"/>
        <end position="320"/>
    </location>
</feature>
<feature type="helix" evidence="23">
    <location>
        <begin position="322"/>
        <end position="331"/>
    </location>
</feature>
<feature type="strand" evidence="23">
    <location>
        <begin position="335"/>
        <end position="340"/>
    </location>
</feature>
<feature type="helix" evidence="23">
    <location>
        <begin position="344"/>
        <end position="353"/>
    </location>
</feature>
<feature type="helix" evidence="23">
    <location>
        <begin position="360"/>
        <end position="363"/>
    </location>
</feature>
<feature type="strand" evidence="23">
    <location>
        <begin position="366"/>
        <end position="370"/>
    </location>
</feature>
<dbReference type="EC" id="1.18.1.2" evidence="12 13 14 15"/>
<dbReference type="EMBL" id="AL844505">
    <property type="protein sequence ID" value="CAG25044.1"/>
    <property type="molecule type" value="Genomic_DNA"/>
</dbReference>
<dbReference type="RefSeq" id="XP_966214.1">
    <property type="nucleotide sequence ID" value="XM_961121.1"/>
</dbReference>
<dbReference type="PDB" id="2OK7">
    <property type="method" value="X-ray"/>
    <property type="resolution" value="2.70 A"/>
    <property type="chains" value="A/B/C/D/E/F=56-371"/>
</dbReference>
<dbReference type="PDB" id="2OK8">
    <property type="method" value="X-ray"/>
    <property type="resolution" value="2.40 A"/>
    <property type="chains" value="A/B/C/D=56-371"/>
</dbReference>
<dbReference type="PDB" id="3JQP">
    <property type="method" value="X-ray"/>
    <property type="resolution" value="3.00 A"/>
    <property type="chains" value="A/B/C/D/E/F=56-371"/>
</dbReference>
<dbReference type="PDB" id="3JQQ">
    <property type="method" value="X-ray"/>
    <property type="resolution" value="2.20 A"/>
    <property type="chains" value="A/B/C/D/E/F=56-371"/>
</dbReference>
<dbReference type="PDB" id="3JQR">
    <property type="method" value="X-ray"/>
    <property type="resolution" value="2.30 A"/>
    <property type="chains" value="A=56-371"/>
</dbReference>
<dbReference type="PDBsum" id="2OK7"/>
<dbReference type="PDBsum" id="2OK8"/>
<dbReference type="PDBsum" id="3JQP"/>
<dbReference type="PDBsum" id="3JQQ"/>
<dbReference type="PDBsum" id="3JQR"/>
<dbReference type="SMR" id="C6KT68"/>
<dbReference type="FunCoup" id="C6KT68">
    <property type="interactions" value="17"/>
</dbReference>
<dbReference type="IntAct" id="C6KT68">
    <property type="interactions" value="1"/>
</dbReference>
<dbReference type="MINT" id="C6KT68"/>
<dbReference type="STRING" id="36329.C6KT68"/>
<dbReference type="DrugBank" id="DB06608">
    <property type="generic name" value="Tafenoquine"/>
</dbReference>
<dbReference type="PaxDb" id="5833-PFF1115w"/>
<dbReference type="EnsemblProtists" id="CAG25044">
    <property type="protein sequence ID" value="CAG25044"/>
    <property type="gene ID" value="PF3D7_0623200"/>
</dbReference>
<dbReference type="GeneID" id="3885862"/>
<dbReference type="KEGG" id="pfa:PF3D7_0623200"/>
<dbReference type="VEuPathDB" id="PlasmoDB:PF3D7_0623200"/>
<dbReference type="HOGENOM" id="CLU_755410_0_0_1"/>
<dbReference type="InParanoid" id="C6KT68"/>
<dbReference type="OMA" id="GKAWLFM"/>
<dbReference type="OrthoDB" id="1688044at2759"/>
<dbReference type="PhylomeDB" id="C6KT68"/>
<dbReference type="BRENDA" id="1.18.1.2">
    <property type="organism ID" value="4889"/>
</dbReference>
<dbReference type="SABIO-RK" id="C6KT68"/>
<dbReference type="EvolutionaryTrace" id="C6KT68"/>
<dbReference type="Proteomes" id="UP000001450">
    <property type="component" value="Chromosome 6"/>
</dbReference>
<dbReference type="GO" id="GO:0020011">
    <property type="term" value="C:apicoplast"/>
    <property type="evidence" value="ECO:0000314"/>
    <property type="project" value="GeneDB"/>
</dbReference>
<dbReference type="GO" id="GO:0009055">
    <property type="term" value="F:electron transfer activity"/>
    <property type="evidence" value="ECO:0000314"/>
    <property type="project" value="GeneDB"/>
</dbReference>
<dbReference type="GO" id="GO:0071949">
    <property type="term" value="F:FAD binding"/>
    <property type="evidence" value="ECO:0000314"/>
    <property type="project" value="UniProtKB"/>
</dbReference>
<dbReference type="GO" id="GO:0008937">
    <property type="term" value="F:ferredoxin-[NAD(P)H] reductase activity"/>
    <property type="evidence" value="ECO:0000314"/>
    <property type="project" value="UniProtKB"/>
</dbReference>
<dbReference type="GO" id="GO:0004324">
    <property type="term" value="F:ferredoxin-NADP+ reductase activity"/>
    <property type="evidence" value="ECO:0007669"/>
    <property type="project" value="UniProtKB-EC"/>
</dbReference>
<dbReference type="GO" id="GO:0042802">
    <property type="term" value="F:identical protein binding"/>
    <property type="evidence" value="ECO:0000353"/>
    <property type="project" value="IntAct"/>
</dbReference>
<dbReference type="GO" id="GO:0010322">
    <property type="term" value="P:regulation of isopentenyl diphosphate biosynthetic process, methylerythritol 4-phosphate pathway"/>
    <property type="evidence" value="ECO:0000314"/>
    <property type="project" value="UniProtKB"/>
</dbReference>
<dbReference type="CDD" id="cd06208">
    <property type="entry name" value="CYPOR_like_FNR"/>
    <property type="match status" value="1"/>
</dbReference>
<dbReference type="FunFam" id="2.40.30.10:FF:000142">
    <property type="entry name" value="Ferredoxin NADP reductase"/>
    <property type="match status" value="1"/>
</dbReference>
<dbReference type="FunFam" id="3.40.50.80:FF:000051">
    <property type="entry name" value="Ferredoxin--NADP reductase, apicoplast"/>
    <property type="match status" value="1"/>
</dbReference>
<dbReference type="Gene3D" id="3.40.50.80">
    <property type="entry name" value="Nucleotide-binding domain of ferredoxin-NADP reductase (FNR) module"/>
    <property type="match status" value="1"/>
</dbReference>
<dbReference type="Gene3D" id="2.40.30.10">
    <property type="entry name" value="Translation factors"/>
    <property type="match status" value="1"/>
</dbReference>
<dbReference type="InterPro" id="IPR017927">
    <property type="entry name" value="FAD-bd_FR_type"/>
</dbReference>
<dbReference type="InterPro" id="IPR001709">
    <property type="entry name" value="Flavoprot_Pyr_Nucl_cyt_Rdtase"/>
</dbReference>
<dbReference type="InterPro" id="IPR015701">
    <property type="entry name" value="FNR"/>
</dbReference>
<dbReference type="InterPro" id="IPR039261">
    <property type="entry name" value="FNR_nucleotide-bd"/>
</dbReference>
<dbReference type="InterPro" id="IPR001433">
    <property type="entry name" value="OxRdtase_FAD/NAD-bd"/>
</dbReference>
<dbReference type="InterPro" id="IPR017938">
    <property type="entry name" value="Riboflavin_synthase-like_b-brl"/>
</dbReference>
<dbReference type="PANTHER" id="PTHR43314">
    <property type="match status" value="1"/>
</dbReference>
<dbReference type="Pfam" id="PF00175">
    <property type="entry name" value="NAD_binding_1"/>
    <property type="match status" value="1"/>
</dbReference>
<dbReference type="PRINTS" id="PR00371">
    <property type="entry name" value="FPNCR"/>
</dbReference>
<dbReference type="SUPFAM" id="SSF52343">
    <property type="entry name" value="Ferredoxin reductase-like, C-terminal NADP-linked domain"/>
    <property type="match status" value="1"/>
</dbReference>
<dbReference type="SUPFAM" id="SSF63380">
    <property type="entry name" value="Riboflavin synthase domain-like"/>
    <property type="match status" value="1"/>
</dbReference>
<dbReference type="PROSITE" id="PS51384">
    <property type="entry name" value="FAD_FR"/>
    <property type="match status" value="1"/>
</dbReference>
<accession>C6KT68</accession>
<organism evidence="16">
    <name type="scientific">Plasmodium falciparum (isolate 3D7)</name>
    <dbReference type="NCBI Taxonomy" id="36329"/>
    <lineage>
        <taxon>Eukaryota</taxon>
        <taxon>Sar</taxon>
        <taxon>Alveolata</taxon>
        <taxon>Apicomplexa</taxon>
        <taxon>Aconoidasida</taxon>
        <taxon>Haemosporida</taxon>
        <taxon>Plasmodiidae</taxon>
        <taxon>Plasmodium</taxon>
        <taxon>Plasmodium (Laverania)</taxon>
    </lineage>
</organism>